<accession>B1MZ17</accession>
<gene>
    <name evidence="1" type="primary">rnhB</name>
    <name type="ordered locus">LCK_00941</name>
</gene>
<comment type="function">
    <text evidence="1">Endonuclease that specifically degrades the RNA of RNA-DNA hybrids.</text>
</comment>
<comment type="catalytic activity">
    <reaction evidence="1">
        <text>Endonucleolytic cleavage to 5'-phosphomonoester.</text>
        <dbReference type="EC" id="3.1.26.4"/>
    </reaction>
</comment>
<comment type="cofactor">
    <cofactor evidence="1">
        <name>Mn(2+)</name>
        <dbReference type="ChEBI" id="CHEBI:29035"/>
    </cofactor>
    <cofactor evidence="1">
        <name>Mg(2+)</name>
        <dbReference type="ChEBI" id="CHEBI:18420"/>
    </cofactor>
    <text evidence="1">Manganese or magnesium. Binds 1 divalent metal ion per monomer in the absence of substrate. May bind a second metal ion after substrate binding.</text>
</comment>
<comment type="subcellular location">
    <subcellularLocation>
        <location evidence="1">Cytoplasm</location>
    </subcellularLocation>
</comment>
<comment type="similarity">
    <text evidence="1">Belongs to the RNase HII family.</text>
</comment>
<comment type="sequence caution" evidence="3">
    <conflict type="erroneous initiation">
        <sequence resource="EMBL-CDS" id="ACA82769"/>
    </conflict>
</comment>
<organism>
    <name type="scientific">Leuconostoc citreum (strain KM20)</name>
    <dbReference type="NCBI Taxonomy" id="349519"/>
    <lineage>
        <taxon>Bacteria</taxon>
        <taxon>Bacillati</taxon>
        <taxon>Bacillota</taxon>
        <taxon>Bacilli</taxon>
        <taxon>Lactobacillales</taxon>
        <taxon>Lactobacillaceae</taxon>
        <taxon>Leuconostoc</taxon>
    </lineage>
</organism>
<sequence>MTETIATIKEKLASLADPHDARLLTWRQDKRCGVQKAIALWEKRLALARKKQADFNQRFNFERDYWLKGVELVAGVDEVGRGPLAGPVVAAAVILPHDFNIVDVIDSKQVAQHKREQLYEIILDQAVSIGIGSVDAKTIDEINIYEAARQAMTEAINNLAPQPQALLIDAMQVYLDITQQSLIKGDARSNSIGAASIVAKVIRDKMMTDYDKVYPGYDFAQNAGYGTKKHLAGIDKLGVTPIHRRSFQPVHDAIVNKKNC</sequence>
<keyword id="KW-0963">Cytoplasm</keyword>
<keyword id="KW-0255">Endonuclease</keyword>
<keyword id="KW-0378">Hydrolase</keyword>
<keyword id="KW-0464">Manganese</keyword>
<keyword id="KW-0479">Metal-binding</keyword>
<keyword id="KW-0540">Nuclease</keyword>
<keyword id="KW-1185">Reference proteome</keyword>
<proteinExistence type="inferred from homology"/>
<reference key="1">
    <citation type="journal article" date="2008" name="J. Bacteriol.">
        <title>Complete genome sequence of Leuconostoc citreum KM20.</title>
        <authorList>
            <person name="Kim J.F."/>
            <person name="Jeong H."/>
            <person name="Lee J.-S."/>
            <person name="Choi S.-H."/>
            <person name="Ha M."/>
            <person name="Hur C.-G."/>
            <person name="Kim J.-S."/>
            <person name="Lee S."/>
            <person name="Park H.-S."/>
            <person name="Park Y.-H."/>
            <person name="Oh T.K."/>
        </authorList>
    </citation>
    <scope>NUCLEOTIDE SEQUENCE [LARGE SCALE GENOMIC DNA]</scope>
    <source>
        <strain>KM20</strain>
    </source>
</reference>
<dbReference type="EC" id="3.1.26.4" evidence="1"/>
<dbReference type="EMBL" id="DQ489736">
    <property type="protein sequence ID" value="ACA82769.1"/>
    <property type="status" value="ALT_INIT"/>
    <property type="molecule type" value="Genomic_DNA"/>
</dbReference>
<dbReference type="RefSeq" id="WP_041761713.1">
    <property type="nucleotide sequence ID" value="NC_010471.1"/>
</dbReference>
<dbReference type="SMR" id="B1MZ17"/>
<dbReference type="STRING" id="349519.LCK_00941"/>
<dbReference type="KEGG" id="lci:LCK_00941"/>
<dbReference type="eggNOG" id="COG0164">
    <property type="taxonomic scope" value="Bacteria"/>
</dbReference>
<dbReference type="HOGENOM" id="CLU_036532_2_1_9"/>
<dbReference type="OrthoDB" id="9803420at2"/>
<dbReference type="Proteomes" id="UP000002166">
    <property type="component" value="Chromosome"/>
</dbReference>
<dbReference type="GO" id="GO:0005737">
    <property type="term" value="C:cytoplasm"/>
    <property type="evidence" value="ECO:0007669"/>
    <property type="project" value="UniProtKB-SubCell"/>
</dbReference>
<dbReference type="GO" id="GO:0032299">
    <property type="term" value="C:ribonuclease H2 complex"/>
    <property type="evidence" value="ECO:0007669"/>
    <property type="project" value="TreeGrafter"/>
</dbReference>
<dbReference type="GO" id="GO:0030145">
    <property type="term" value="F:manganese ion binding"/>
    <property type="evidence" value="ECO:0007669"/>
    <property type="project" value="UniProtKB-UniRule"/>
</dbReference>
<dbReference type="GO" id="GO:0003723">
    <property type="term" value="F:RNA binding"/>
    <property type="evidence" value="ECO:0007669"/>
    <property type="project" value="InterPro"/>
</dbReference>
<dbReference type="GO" id="GO:0004523">
    <property type="term" value="F:RNA-DNA hybrid ribonuclease activity"/>
    <property type="evidence" value="ECO:0007669"/>
    <property type="project" value="UniProtKB-UniRule"/>
</dbReference>
<dbReference type="GO" id="GO:0043137">
    <property type="term" value="P:DNA replication, removal of RNA primer"/>
    <property type="evidence" value="ECO:0007669"/>
    <property type="project" value="TreeGrafter"/>
</dbReference>
<dbReference type="GO" id="GO:0006298">
    <property type="term" value="P:mismatch repair"/>
    <property type="evidence" value="ECO:0007669"/>
    <property type="project" value="TreeGrafter"/>
</dbReference>
<dbReference type="CDD" id="cd07182">
    <property type="entry name" value="RNase_HII_bacteria_HII_like"/>
    <property type="match status" value="1"/>
</dbReference>
<dbReference type="FunFam" id="3.30.420.10:FF:000006">
    <property type="entry name" value="Ribonuclease HII"/>
    <property type="match status" value="1"/>
</dbReference>
<dbReference type="Gene3D" id="3.30.420.10">
    <property type="entry name" value="Ribonuclease H-like superfamily/Ribonuclease H"/>
    <property type="match status" value="1"/>
</dbReference>
<dbReference type="HAMAP" id="MF_00052_B">
    <property type="entry name" value="RNase_HII_B"/>
    <property type="match status" value="1"/>
</dbReference>
<dbReference type="InterPro" id="IPR022898">
    <property type="entry name" value="RNase_HII"/>
</dbReference>
<dbReference type="InterPro" id="IPR001352">
    <property type="entry name" value="RNase_HII/HIII"/>
</dbReference>
<dbReference type="InterPro" id="IPR024567">
    <property type="entry name" value="RNase_HII/HIII_dom"/>
</dbReference>
<dbReference type="InterPro" id="IPR012337">
    <property type="entry name" value="RNaseH-like_sf"/>
</dbReference>
<dbReference type="InterPro" id="IPR036397">
    <property type="entry name" value="RNaseH_sf"/>
</dbReference>
<dbReference type="NCBIfam" id="NF000594">
    <property type="entry name" value="PRK00015.1-1"/>
    <property type="match status" value="1"/>
</dbReference>
<dbReference type="NCBIfam" id="NF000595">
    <property type="entry name" value="PRK00015.1-3"/>
    <property type="match status" value="1"/>
</dbReference>
<dbReference type="PANTHER" id="PTHR10954">
    <property type="entry name" value="RIBONUCLEASE H2 SUBUNIT A"/>
    <property type="match status" value="1"/>
</dbReference>
<dbReference type="PANTHER" id="PTHR10954:SF18">
    <property type="entry name" value="RIBONUCLEASE HII"/>
    <property type="match status" value="1"/>
</dbReference>
<dbReference type="Pfam" id="PF01351">
    <property type="entry name" value="RNase_HII"/>
    <property type="match status" value="1"/>
</dbReference>
<dbReference type="SUPFAM" id="SSF53098">
    <property type="entry name" value="Ribonuclease H-like"/>
    <property type="match status" value="1"/>
</dbReference>
<dbReference type="PROSITE" id="PS51975">
    <property type="entry name" value="RNASE_H_2"/>
    <property type="match status" value="1"/>
</dbReference>
<name>RNH2_LEUCK</name>
<evidence type="ECO:0000255" key="1">
    <source>
        <dbReference type="HAMAP-Rule" id="MF_00052"/>
    </source>
</evidence>
<evidence type="ECO:0000255" key="2">
    <source>
        <dbReference type="PROSITE-ProRule" id="PRU01319"/>
    </source>
</evidence>
<evidence type="ECO:0000305" key="3"/>
<protein>
    <recommendedName>
        <fullName evidence="1">Ribonuclease HII</fullName>
        <shortName evidence="1">RNase HII</shortName>
        <ecNumber evidence="1">3.1.26.4</ecNumber>
    </recommendedName>
</protein>
<feature type="chain" id="PRO_0000334913" description="Ribonuclease HII">
    <location>
        <begin position="1"/>
        <end position="260"/>
    </location>
</feature>
<feature type="domain" description="RNase H type-2" evidence="2">
    <location>
        <begin position="71"/>
        <end position="259"/>
    </location>
</feature>
<feature type="binding site" evidence="1">
    <location>
        <position position="77"/>
    </location>
    <ligand>
        <name>a divalent metal cation</name>
        <dbReference type="ChEBI" id="CHEBI:60240"/>
    </ligand>
</feature>
<feature type="binding site" evidence="1">
    <location>
        <position position="78"/>
    </location>
    <ligand>
        <name>a divalent metal cation</name>
        <dbReference type="ChEBI" id="CHEBI:60240"/>
    </ligand>
</feature>
<feature type="binding site" evidence="1">
    <location>
        <position position="169"/>
    </location>
    <ligand>
        <name>a divalent metal cation</name>
        <dbReference type="ChEBI" id="CHEBI:60240"/>
    </ligand>
</feature>